<feature type="initiator methionine" description="Removed" evidence="1">
    <location>
        <position position="1"/>
    </location>
</feature>
<feature type="chain" id="PRO_0000410103" description="Guanine nucleotide-binding protein subunit alpha">
    <location>
        <begin position="2"/>
        <end position="432"/>
    </location>
</feature>
<feature type="domain" description="G-alpha" evidence="4">
    <location>
        <begin position="111"/>
        <end position="432"/>
    </location>
</feature>
<feature type="region of interest" description="Disordered" evidence="5">
    <location>
        <begin position="1"/>
        <end position="97"/>
    </location>
</feature>
<feature type="region of interest" description="G1 motif" evidence="4">
    <location>
        <begin position="114"/>
        <end position="127"/>
    </location>
</feature>
<feature type="region of interest" description="G2 motif" evidence="4">
    <location>
        <begin position="253"/>
        <end position="261"/>
    </location>
</feature>
<feature type="region of interest" description="G3 motif" evidence="4">
    <location>
        <begin position="276"/>
        <end position="285"/>
    </location>
</feature>
<feature type="region of interest" description="G4 motif" evidence="4">
    <location>
        <begin position="345"/>
        <end position="352"/>
    </location>
</feature>
<feature type="region of interest" description="G5 motif" evidence="4">
    <location>
        <begin position="402"/>
        <end position="407"/>
    </location>
</feature>
<feature type="compositionally biased region" description="Low complexity" evidence="5">
    <location>
        <begin position="21"/>
        <end position="52"/>
    </location>
</feature>
<feature type="binding site" evidence="3">
    <location>
        <position position="122"/>
    </location>
    <ligand>
        <name>GTP</name>
        <dbReference type="ChEBI" id="CHEBI:37565"/>
    </ligand>
</feature>
<feature type="binding site" evidence="3">
    <location>
        <position position="123"/>
    </location>
    <ligand>
        <name>GTP</name>
        <dbReference type="ChEBI" id="CHEBI:37565"/>
    </ligand>
</feature>
<feature type="binding site" evidence="3">
    <location>
        <position position="124"/>
    </location>
    <ligand>
        <name>GTP</name>
        <dbReference type="ChEBI" id="CHEBI:37565"/>
    </ligand>
</feature>
<feature type="binding site" evidence="3">
    <location>
        <position position="125"/>
    </location>
    <ligand>
        <name>GTP</name>
        <dbReference type="ChEBI" id="CHEBI:37565"/>
    </ligand>
</feature>
<feature type="binding site" evidence="3">
    <location>
        <position position="126"/>
    </location>
    <ligand>
        <name>GTP</name>
        <dbReference type="ChEBI" id="CHEBI:37565"/>
    </ligand>
</feature>
<feature type="binding site" evidence="3">
    <location>
        <position position="126"/>
    </location>
    <ligand>
        <name>Mg(2+)</name>
        <dbReference type="ChEBI" id="CHEBI:18420"/>
    </ligand>
</feature>
<feature type="binding site" evidence="3">
    <location>
        <position position="127"/>
    </location>
    <ligand>
        <name>GTP</name>
        <dbReference type="ChEBI" id="CHEBI:37565"/>
    </ligand>
</feature>
<feature type="binding site" evidence="3">
    <location>
        <position position="230"/>
    </location>
    <ligand>
        <name>GTP</name>
        <dbReference type="ChEBI" id="CHEBI:37565"/>
    </ligand>
</feature>
<feature type="binding site" evidence="3">
    <location>
        <position position="255"/>
    </location>
    <ligand>
        <name>GTP</name>
        <dbReference type="ChEBI" id="CHEBI:37565"/>
    </ligand>
</feature>
<feature type="binding site" evidence="3">
    <location>
        <position position="261"/>
    </location>
    <ligand>
        <name>GTP</name>
        <dbReference type="ChEBI" id="CHEBI:37565"/>
    </ligand>
</feature>
<feature type="binding site" evidence="3">
    <location>
        <position position="261"/>
    </location>
    <ligand>
        <name>Mg(2+)</name>
        <dbReference type="ChEBI" id="CHEBI:18420"/>
    </ligand>
</feature>
<feature type="binding site" evidence="3">
    <location>
        <position position="283"/>
    </location>
    <ligand>
        <name>GTP</name>
        <dbReference type="ChEBI" id="CHEBI:37565"/>
    </ligand>
</feature>
<feature type="binding site" evidence="3">
    <location>
        <position position="349"/>
    </location>
    <ligand>
        <name>GTP</name>
        <dbReference type="ChEBI" id="CHEBI:37565"/>
    </ligand>
</feature>
<feature type="binding site" evidence="3">
    <location>
        <position position="350"/>
    </location>
    <ligand>
        <name>GTP</name>
        <dbReference type="ChEBI" id="CHEBI:37565"/>
    </ligand>
</feature>
<feature type="binding site" evidence="3">
    <location>
        <position position="352"/>
    </location>
    <ligand>
        <name>GTP</name>
        <dbReference type="ChEBI" id="CHEBI:37565"/>
    </ligand>
</feature>
<feature type="binding site" evidence="3">
    <location>
        <position position="404"/>
    </location>
    <ligand>
        <name>GTP</name>
        <dbReference type="ChEBI" id="CHEBI:37565"/>
    </ligand>
</feature>
<feature type="lipid moiety-binding region" description="N-myristoyl glycine" evidence="2">
    <location>
        <position position="2"/>
    </location>
</feature>
<feature type="lipid moiety-binding region" description="S-palmitoyl cysteine" evidence="2">
    <location>
        <position position="4"/>
    </location>
</feature>
<comment type="function">
    <text>Guanine nucleotide-binding proteins (G proteins) are involved as modulators or transducers in various transmembrane signaling systems. Involved in the mating pathway.</text>
</comment>
<comment type="cofactor">
    <cofactor evidence="3">
        <name>Mg(2+)</name>
        <dbReference type="ChEBI" id="CHEBI:18420"/>
    </cofactor>
</comment>
<comment type="subunit">
    <text>G proteins are composed of 3 units; alpha, beta and gamma. The alpha chain contains the guanine nucleotide binding site.</text>
</comment>
<comment type="similarity">
    <text evidence="6">Belongs to the G-alpha family.</text>
</comment>
<reference key="1">
    <citation type="journal article" date="2005" name="Science">
        <title>The genome of the basidiomycetous yeast and human pathogen Cryptococcus neoformans.</title>
        <authorList>
            <person name="Loftus B.J."/>
            <person name="Fung E."/>
            <person name="Roncaglia P."/>
            <person name="Rowley D."/>
            <person name="Amedeo P."/>
            <person name="Bruno D."/>
            <person name="Vamathevan J."/>
            <person name="Miranda M."/>
            <person name="Anderson I.J."/>
            <person name="Fraser J.A."/>
            <person name="Allen J.E."/>
            <person name="Bosdet I.E."/>
            <person name="Brent M.R."/>
            <person name="Chiu R."/>
            <person name="Doering T.L."/>
            <person name="Donlin M.J."/>
            <person name="D'Souza C.A."/>
            <person name="Fox D.S."/>
            <person name="Grinberg V."/>
            <person name="Fu J."/>
            <person name="Fukushima M."/>
            <person name="Haas B.J."/>
            <person name="Huang J.C."/>
            <person name="Janbon G."/>
            <person name="Jones S.J.M."/>
            <person name="Koo H.L."/>
            <person name="Krzywinski M.I."/>
            <person name="Kwon-Chung K.J."/>
            <person name="Lengeler K.B."/>
            <person name="Maiti R."/>
            <person name="Marra M.A."/>
            <person name="Marra R.E."/>
            <person name="Mathewson C.A."/>
            <person name="Mitchell T.G."/>
            <person name="Pertea M."/>
            <person name="Riggs F.R."/>
            <person name="Salzberg S.L."/>
            <person name="Schein J.E."/>
            <person name="Shvartsbeyn A."/>
            <person name="Shin H."/>
            <person name="Shumway M."/>
            <person name="Specht C.A."/>
            <person name="Suh B.B."/>
            <person name="Tenney A."/>
            <person name="Utterback T.R."/>
            <person name="Wickes B.L."/>
            <person name="Wortman J.R."/>
            <person name="Wye N.H."/>
            <person name="Kronstad J.W."/>
            <person name="Lodge J.K."/>
            <person name="Heitman J."/>
            <person name="Davis R.W."/>
            <person name="Fraser C.M."/>
            <person name="Hyman R.W."/>
        </authorList>
    </citation>
    <scope>NUCLEOTIDE SEQUENCE [LARGE SCALE GENOMIC DNA]</scope>
    <source>
        <strain>B-3501A</strain>
    </source>
</reference>
<proteinExistence type="inferred from homology"/>
<evidence type="ECO:0000250" key="1"/>
<evidence type="ECO:0000250" key="2">
    <source>
        <dbReference type="UniProtKB" id="P08539"/>
    </source>
</evidence>
<evidence type="ECO:0000250" key="3">
    <source>
        <dbReference type="UniProtKB" id="P18064"/>
    </source>
</evidence>
<evidence type="ECO:0000255" key="4">
    <source>
        <dbReference type="PROSITE-ProRule" id="PRU01230"/>
    </source>
</evidence>
<evidence type="ECO:0000256" key="5">
    <source>
        <dbReference type="SAM" id="MobiDB-lite"/>
    </source>
</evidence>
<evidence type="ECO:0000305" key="6"/>
<dbReference type="EMBL" id="AAEY01000041">
    <property type="protein sequence ID" value="EAL19355.1"/>
    <property type="molecule type" value="Genomic_DNA"/>
</dbReference>
<dbReference type="RefSeq" id="XP_774002.1">
    <property type="nucleotide sequence ID" value="XM_768909.1"/>
</dbReference>
<dbReference type="SMR" id="P0CN97"/>
<dbReference type="EnsemblFungi" id="AAW45486">
    <property type="protein sequence ID" value="AAW45486"/>
    <property type="gene ID" value="CNI00520"/>
</dbReference>
<dbReference type="GeneID" id="4937564"/>
<dbReference type="KEGG" id="cnb:CNBH0490"/>
<dbReference type="VEuPathDB" id="FungiDB:CNBH0490"/>
<dbReference type="HOGENOM" id="CLU_014184_0_1_1"/>
<dbReference type="OrthoDB" id="4743at5206"/>
<dbReference type="GO" id="GO:0005737">
    <property type="term" value="C:cytoplasm"/>
    <property type="evidence" value="ECO:0007669"/>
    <property type="project" value="TreeGrafter"/>
</dbReference>
<dbReference type="GO" id="GO:0005834">
    <property type="term" value="C:heterotrimeric G-protein complex"/>
    <property type="evidence" value="ECO:0007669"/>
    <property type="project" value="InterPro"/>
</dbReference>
<dbReference type="GO" id="GO:0001664">
    <property type="term" value="F:G protein-coupled receptor binding"/>
    <property type="evidence" value="ECO:0007669"/>
    <property type="project" value="InterPro"/>
</dbReference>
<dbReference type="GO" id="GO:0031683">
    <property type="term" value="F:G-protein beta/gamma-subunit complex binding"/>
    <property type="evidence" value="ECO:0007669"/>
    <property type="project" value="InterPro"/>
</dbReference>
<dbReference type="GO" id="GO:0005525">
    <property type="term" value="F:GTP binding"/>
    <property type="evidence" value="ECO:0007669"/>
    <property type="project" value="UniProtKB-KW"/>
</dbReference>
<dbReference type="GO" id="GO:0003924">
    <property type="term" value="F:GTPase activity"/>
    <property type="evidence" value="ECO:0007669"/>
    <property type="project" value="InterPro"/>
</dbReference>
<dbReference type="GO" id="GO:0046872">
    <property type="term" value="F:metal ion binding"/>
    <property type="evidence" value="ECO:0007669"/>
    <property type="project" value="UniProtKB-KW"/>
</dbReference>
<dbReference type="GO" id="GO:0007189">
    <property type="term" value="P:adenylate cyclase-activating G protein-coupled receptor signaling pathway"/>
    <property type="evidence" value="ECO:0007669"/>
    <property type="project" value="TreeGrafter"/>
</dbReference>
<dbReference type="CDD" id="cd00066">
    <property type="entry name" value="G-alpha"/>
    <property type="match status" value="1"/>
</dbReference>
<dbReference type="FunFam" id="1.10.400.10:FF:000007">
    <property type="entry name" value="Guanine nucleotide-binding protein subunit alpha"/>
    <property type="match status" value="1"/>
</dbReference>
<dbReference type="FunFam" id="3.40.50.300:FF:000181">
    <property type="entry name" value="Guanine nucleotide-binding protein subunit alpha"/>
    <property type="match status" value="1"/>
</dbReference>
<dbReference type="FunFam" id="3.40.50.300:FF:000692">
    <property type="entry name" value="Guanine nucleotide-binding protein subunit alpha"/>
    <property type="match status" value="1"/>
</dbReference>
<dbReference type="Gene3D" id="1.10.400.10">
    <property type="entry name" value="GI Alpha 1, domain 2-like"/>
    <property type="match status" value="1"/>
</dbReference>
<dbReference type="Gene3D" id="3.40.50.300">
    <property type="entry name" value="P-loop containing nucleotide triphosphate hydrolases"/>
    <property type="match status" value="1"/>
</dbReference>
<dbReference type="InterPro" id="IPR002975">
    <property type="entry name" value="Fungi_Gprotein_alpha"/>
</dbReference>
<dbReference type="InterPro" id="IPR001019">
    <property type="entry name" value="Gprotein_alpha_su"/>
</dbReference>
<dbReference type="InterPro" id="IPR011025">
    <property type="entry name" value="GproteinA_insert"/>
</dbReference>
<dbReference type="InterPro" id="IPR027417">
    <property type="entry name" value="P-loop_NTPase"/>
</dbReference>
<dbReference type="PANTHER" id="PTHR10218">
    <property type="entry name" value="GTP-BINDING PROTEIN ALPHA SUBUNIT"/>
    <property type="match status" value="1"/>
</dbReference>
<dbReference type="PANTHER" id="PTHR10218:SF369">
    <property type="entry name" value="GUANINE NUCLEOTIDE-BINDING PROTEIN ALPHA-2 SUBUNIT"/>
    <property type="match status" value="1"/>
</dbReference>
<dbReference type="Pfam" id="PF00503">
    <property type="entry name" value="G-alpha"/>
    <property type="match status" value="1"/>
</dbReference>
<dbReference type="PRINTS" id="PR00318">
    <property type="entry name" value="GPROTEINA"/>
</dbReference>
<dbReference type="PRINTS" id="PR01241">
    <property type="entry name" value="GPROTEINAFNG"/>
</dbReference>
<dbReference type="SMART" id="SM00275">
    <property type="entry name" value="G_alpha"/>
    <property type="match status" value="1"/>
</dbReference>
<dbReference type="SUPFAM" id="SSF52540">
    <property type="entry name" value="P-loop containing nucleoside triphosphate hydrolases"/>
    <property type="match status" value="1"/>
</dbReference>
<dbReference type="SUPFAM" id="SSF47895">
    <property type="entry name" value="Transducin (alpha subunit), insertion domain"/>
    <property type="match status" value="1"/>
</dbReference>
<dbReference type="PROSITE" id="PS51882">
    <property type="entry name" value="G_ALPHA"/>
    <property type="match status" value="1"/>
</dbReference>
<keyword id="KW-0342">GTP-binding</keyword>
<keyword id="KW-0378">Hydrolase</keyword>
<keyword id="KW-0449">Lipoprotein</keyword>
<keyword id="KW-0460">Magnesium</keyword>
<keyword id="KW-0479">Metal-binding</keyword>
<keyword id="KW-0519">Myristate</keyword>
<keyword id="KW-0547">Nucleotide-binding</keyword>
<keyword id="KW-0564">Palmitate</keyword>
<keyword id="KW-0807">Transducer</keyword>
<protein>
    <recommendedName>
        <fullName>Guanine nucleotide-binding protein subunit alpha</fullName>
    </recommendedName>
</protein>
<gene>
    <name type="primary">GPA1</name>
    <name type="ordered locus">CNBH0490</name>
</gene>
<accession>P0CN97</accession>
<accession>P54853</accession>
<accession>Q55NP0</accession>
<accession>Q5KC25</accession>
<accession>Q9UW41</accession>
<sequence>MGGCMSTPEAPKKTAETKQVPSTSTSSRPPQASTSATATAAGAGTSAANGTANGIKGDTTATNRVGTSGGQGLAAALASTEPPGAQDSKGNKDRSNQIDRQLEDDQKKFRKECKILLLGSGESGKSTIVKQMKIIHQNGYSKDELLSFRGVIYKNVLDSAQALIMAMRKIGVDPEDANNRSYADRILEYRMDAGLDAVIPSEILYNIESLWHDPVIPSVMDRSSEFYLMDSATYFFANIRKIAGPDYVPDEADVLRARTKTTGISETRFNMGQLSIHMFDVGGQRSERKKWIHCFEAVTSIIFCVALSEYDQVLLEESGQNRMQESLVLFESVINSRWFLRTSVILFLNKIDLFKQKLPKVPLVQYFPEYTGGADINKAAKYILWRFTQTNRARLSVYPHLTQATDTSNIRLVFAAVKETILQNALRDSGIL</sequence>
<organism>
    <name type="scientific">Cryptococcus neoformans var. neoformans serotype D (strain B-3501A)</name>
    <name type="common">Filobasidiella neoformans</name>
    <dbReference type="NCBI Taxonomy" id="283643"/>
    <lineage>
        <taxon>Eukaryota</taxon>
        <taxon>Fungi</taxon>
        <taxon>Dikarya</taxon>
        <taxon>Basidiomycota</taxon>
        <taxon>Agaricomycotina</taxon>
        <taxon>Tremellomycetes</taxon>
        <taxon>Tremellales</taxon>
        <taxon>Cryptococcaceae</taxon>
        <taxon>Cryptococcus</taxon>
        <taxon>Cryptococcus neoformans species complex</taxon>
    </lineage>
</organism>
<name>GPA1_CRYNB</name>